<reference key="1">
    <citation type="submission" date="2005-08" db="EMBL/GenBank/DDBJ databases">
        <title>Complete sequence of chromosome 1 of Nitrosospira multiformis ATCC 25196.</title>
        <authorList>
            <person name="Copeland A."/>
            <person name="Lucas S."/>
            <person name="Lapidus A."/>
            <person name="Barry K."/>
            <person name="Detter J.C."/>
            <person name="Glavina T."/>
            <person name="Hammon N."/>
            <person name="Israni S."/>
            <person name="Pitluck S."/>
            <person name="Chain P."/>
            <person name="Malfatti S."/>
            <person name="Shin M."/>
            <person name="Vergez L."/>
            <person name="Schmutz J."/>
            <person name="Larimer F."/>
            <person name="Land M."/>
            <person name="Hauser L."/>
            <person name="Kyrpides N."/>
            <person name="Lykidis A."/>
            <person name="Richardson P."/>
        </authorList>
    </citation>
    <scope>NUCLEOTIDE SEQUENCE [LARGE SCALE GENOMIC DNA]</scope>
    <source>
        <strain>ATCC 25196 / NCIMB 11849 / C 71</strain>
    </source>
</reference>
<protein>
    <recommendedName>
        <fullName evidence="1">Putative 3-methyladenine DNA glycosylase</fullName>
        <ecNumber evidence="1">3.2.2.-</ecNumber>
    </recommendedName>
</protein>
<accession>Q2Y9K4</accession>
<organism>
    <name type="scientific">Nitrosospira multiformis (strain ATCC 25196 / NCIMB 11849 / C 71)</name>
    <dbReference type="NCBI Taxonomy" id="323848"/>
    <lineage>
        <taxon>Bacteria</taxon>
        <taxon>Pseudomonadati</taxon>
        <taxon>Pseudomonadota</taxon>
        <taxon>Betaproteobacteria</taxon>
        <taxon>Nitrosomonadales</taxon>
        <taxon>Nitrosomonadaceae</taxon>
        <taxon>Nitrosospira</taxon>
    </lineage>
</organism>
<feature type="chain" id="PRO_0000265041" description="Putative 3-methyladenine DNA glycosylase">
    <location>
        <begin position="1"/>
        <end position="193"/>
    </location>
</feature>
<keyword id="KW-0227">DNA damage</keyword>
<keyword id="KW-0234">DNA repair</keyword>
<keyword id="KW-0378">Hydrolase</keyword>
<keyword id="KW-1185">Reference proteome</keyword>
<comment type="similarity">
    <text evidence="1">Belongs to the DNA glycosylase MPG family.</text>
</comment>
<proteinExistence type="inferred from homology"/>
<name>3MGH_NITMU</name>
<gene>
    <name type="ordered locus">Nmul_A1264</name>
</gene>
<evidence type="ECO:0000255" key="1">
    <source>
        <dbReference type="HAMAP-Rule" id="MF_00527"/>
    </source>
</evidence>
<sequence>MSMSQPSIDFSASSVDVARSLIGATLLVNGVGGRIVETEAYDHDDPASHSFSGPTRRNQVMFGPPCHAYIYRSYGIHWCLNFVCRPAGHGAGVLIRAIEPLVGLDIMRKRRGLSDERLLCSGPGRVCEALGITQEYSGMSIDTPPFQLTPPLDPVPVVTGPRIGISKAKDVPWRFGLAGSPFLSRPFRQPDIV</sequence>
<dbReference type="EC" id="3.2.2.-" evidence="1"/>
<dbReference type="EMBL" id="CP000103">
    <property type="protein sequence ID" value="ABB74567.1"/>
    <property type="molecule type" value="Genomic_DNA"/>
</dbReference>
<dbReference type="SMR" id="Q2Y9K4"/>
<dbReference type="STRING" id="323848.Nmul_A1264"/>
<dbReference type="KEGG" id="nmu:Nmul_A1264"/>
<dbReference type="eggNOG" id="COG2094">
    <property type="taxonomic scope" value="Bacteria"/>
</dbReference>
<dbReference type="HOGENOM" id="CLU_060471_3_0_4"/>
<dbReference type="OrthoDB" id="9794313at2"/>
<dbReference type="Proteomes" id="UP000002718">
    <property type="component" value="Chromosome"/>
</dbReference>
<dbReference type="GO" id="GO:0003905">
    <property type="term" value="F:alkylbase DNA N-glycosylase activity"/>
    <property type="evidence" value="ECO:0007669"/>
    <property type="project" value="InterPro"/>
</dbReference>
<dbReference type="GO" id="GO:0003677">
    <property type="term" value="F:DNA binding"/>
    <property type="evidence" value="ECO:0007669"/>
    <property type="project" value="InterPro"/>
</dbReference>
<dbReference type="GO" id="GO:0006284">
    <property type="term" value="P:base-excision repair"/>
    <property type="evidence" value="ECO:0007669"/>
    <property type="project" value="InterPro"/>
</dbReference>
<dbReference type="CDD" id="cd00540">
    <property type="entry name" value="AAG"/>
    <property type="match status" value="1"/>
</dbReference>
<dbReference type="FunFam" id="3.10.300.10:FF:000001">
    <property type="entry name" value="Putative 3-methyladenine DNA glycosylase"/>
    <property type="match status" value="1"/>
</dbReference>
<dbReference type="Gene3D" id="3.10.300.10">
    <property type="entry name" value="Methylpurine-DNA glycosylase (MPG)"/>
    <property type="match status" value="1"/>
</dbReference>
<dbReference type="HAMAP" id="MF_00527">
    <property type="entry name" value="3MGH"/>
    <property type="match status" value="1"/>
</dbReference>
<dbReference type="InterPro" id="IPR011034">
    <property type="entry name" value="Formyl_transferase-like_C_sf"/>
</dbReference>
<dbReference type="InterPro" id="IPR003180">
    <property type="entry name" value="MPG"/>
</dbReference>
<dbReference type="InterPro" id="IPR036995">
    <property type="entry name" value="MPG_sf"/>
</dbReference>
<dbReference type="NCBIfam" id="TIGR00567">
    <property type="entry name" value="3mg"/>
    <property type="match status" value="1"/>
</dbReference>
<dbReference type="NCBIfam" id="NF002003">
    <property type="entry name" value="PRK00802.1-3"/>
    <property type="match status" value="1"/>
</dbReference>
<dbReference type="PANTHER" id="PTHR10429">
    <property type="entry name" value="DNA-3-METHYLADENINE GLYCOSYLASE"/>
    <property type="match status" value="1"/>
</dbReference>
<dbReference type="PANTHER" id="PTHR10429:SF0">
    <property type="entry name" value="DNA-3-METHYLADENINE GLYCOSYLASE"/>
    <property type="match status" value="1"/>
</dbReference>
<dbReference type="Pfam" id="PF02245">
    <property type="entry name" value="Pur_DNA_glyco"/>
    <property type="match status" value="1"/>
</dbReference>
<dbReference type="SUPFAM" id="SSF50486">
    <property type="entry name" value="FMT C-terminal domain-like"/>
    <property type="match status" value="1"/>
</dbReference>